<reference key="1">
    <citation type="journal article" date="2008" name="PLoS ONE">
        <title>A recalibrated molecular clock and independent origins for the cholera pandemic clones.</title>
        <authorList>
            <person name="Feng L."/>
            <person name="Reeves P.R."/>
            <person name="Lan R."/>
            <person name="Ren Y."/>
            <person name="Gao C."/>
            <person name="Zhou Z."/>
            <person name="Ren Y."/>
            <person name="Cheng J."/>
            <person name="Wang W."/>
            <person name="Wang J."/>
            <person name="Qian W."/>
            <person name="Li D."/>
            <person name="Wang L."/>
        </authorList>
    </citation>
    <scope>NUCLEOTIDE SEQUENCE [LARGE SCALE GENOMIC DNA]</scope>
    <source>
        <strain>M66-2</strain>
    </source>
</reference>
<organism>
    <name type="scientific">Vibrio cholerae serotype O1 (strain M66-2)</name>
    <dbReference type="NCBI Taxonomy" id="579112"/>
    <lineage>
        <taxon>Bacteria</taxon>
        <taxon>Pseudomonadati</taxon>
        <taxon>Pseudomonadota</taxon>
        <taxon>Gammaproteobacteria</taxon>
        <taxon>Vibrionales</taxon>
        <taxon>Vibrionaceae</taxon>
        <taxon>Vibrio</taxon>
    </lineage>
</organism>
<proteinExistence type="inferred from homology"/>
<protein>
    <recommendedName>
        <fullName evidence="1">Cysteine desulfurase IscS</fullName>
        <ecNumber evidence="1">2.8.1.7</ecNumber>
    </recommendedName>
</protein>
<comment type="function">
    <text evidence="1">Master enzyme that delivers sulfur to a number of partners involved in Fe-S cluster assembly, tRNA modification or cofactor biosynthesis. Catalyzes the removal of elemental sulfur atoms from cysteine to produce alanine. Functions as a sulfur delivery protein for Fe-S cluster synthesis onto IscU, an Fe-S scaffold assembly protein, as well as other S acceptor proteins.</text>
</comment>
<comment type="catalytic activity">
    <reaction evidence="1">
        <text>(sulfur carrier)-H + L-cysteine = (sulfur carrier)-SH + L-alanine</text>
        <dbReference type="Rhea" id="RHEA:43892"/>
        <dbReference type="Rhea" id="RHEA-COMP:14737"/>
        <dbReference type="Rhea" id="RHEA-COMP:14739"/>
        <dbReference type="ChEBI" id="CHEBI:29917"/>
        <dbReference type="ChEBI" id="CHEBI:35235"/>
        <dbReference type="ChEBI" id="CHEBI:57972"/>
        <dbReference type="ChEBI" id="CHEBI:64428"/>
        <dbReference type="EC" id="2.8.1.7"/>
    </reaction>
</comment>
<comment type="cofactor">
    <cofactor evidence="1">
        <name>pyridoxal 5'-phosphate</name>
        <dbReference type="ChEBI" id="CHEBI:597326"/>
    </cofactor>
</comment>
<comment type="pathway">
    <text evidence="1">Cofactor biosynthesis; iron-sulfur cluster biosynthesis.</text>
</comment>
<comment type="subunit">
    <text evidence="1">Homodimer. Forms a heterotetramer with IscU, interacts with other sulfur acceptors.</text>
</comment>
<comment type="subcellular location">
    <subcellularLocation>
        <location evidence="1">Cytoplasm</location>
    </subcellularLocation>
</comment>
<comment type="similarity">
    <text evidence="1">Belongs to the class-V pyridoxal-phosphate-dependent aminotransferase family. NifS/IscS subfamily.</text>
</comment>
<name>ISCS_VIBCM</name>
<feature type="chain" id="PRO_1000133122" description="Cysteine desulfurase IscS">
    <location>
        <begin position="1"/>
        <end position="404"/>
    </location>
</feature>
<feature type="active site" description="Cysteine persulfide intermediate" evidence="1">
    <location>
        <position position="328"/>
    </location>
</feature>
<feature type="binding site" evidence="1">
    <location>
        <begin position="75"/>
        <end position="76"/>
    </location>
    <ligand>
        <name>pyridoxal 5'-phosphate</name>
        <dbReference type="ChEBI" id="CHEBI:597326"/>
    </ligand>
</feature>
<feature type="binding site" evidence="1">
    <location>
        <position position="155"/>
    </location>
    <ligand>
        <name>pyridoxal 5'-phosphate</name>
        <dbReference type="ChEBI" id="CHEBI:597326"/>
    </ligand>
</feature>
<feature type="binding site" evidence="1">
    <location>
        <position position="183"/>
    </location>
    <ligand>
        <name>pyridoxal 5'-phosphate</name>
        <dbReference type="ChEBI" id="CHEBI:597326"/>
    </ligand>
</feature>
<feature type="binding site" evidence="1">
    <location>
        <begin position="203"/>
        <end position="205"/>
    </location>
    <ligand>
        <name>pyridoxal 5'-phosphate</name>
        <dbReference type="ChEBI" id="CHEBI:597326"/>
    </ligand>
</feature>
<feature type="binding site" evidence="1">
    <location>
        <position position="243"/>
    </location>
    <ligand>
        <name>pyridoxal 5'-phosphate</name>
        <dbReference type="ChEBI" id="CHEBI:597326"/>
    </ligand>
</feature>
<feature type="binding site" description="via persulfide group" evidence="1">
    <location>
        <position position="328"/>
    </location>
    <ligand>
        <name>[2Fe-2S] cluster</name>
        <dbReference type="ChEBI" id="CHEBI:190135"/>
        <note>ligand shared with IscU</note>
    </ligand>
</feature>
<feature type="modified residue" description="N6-(pyridoxal phosphate)lysine" evidence="1">
    <location>
        <position position="206"/>
    </location>
</feature>
<gene>
    <name evidence="1" type="primary">iscS</name>
    <name type="ordered locus">VCM66_0706</name>
</gene>
<keyword id="KW-0001">2Fe-2S</keyword>
<keyword id="KW-0963">Cytoplasm</keyword>
<keyword id="KW-0408">Iron</keyword>
<keyword id="KW-0411">Iron-sulfur</keyword>
<keyword id="KW-0479">Metal-binding</keyword>
<keyword id="KW-0663">Pyridoxal phosphate</keyword>
<keyword id="KW-0808">Transferase</keyword>
<sequence length="404" mass="44823">MKLPIYLDYSATCPVDPRVAEKMVQYMTMDGTFGNPASRSHRYGWQAEEAVDTAREQIAALLNADPREIVFTSGATESDNLAIKGVAHFYNKQGKHIITSKTEHKAVLDTMRQLEREGFEVTYLDPESNGLIDLAKLEAAMRDDTILVSIMHVNNEIGVVQDIAAIGELCRSRKVVFHVDAAQSAGKVAIDVQEMKVDLISLSAHKAYGPKGIGALYVRRKPRIRLEAQMHGGGHERGFRSGTLPTHQIVGMGEAFRIAKEELQQDYDHALKLRNRLLDGIKDMEAVTINGDLDQRVPHNLNVSFAFVEGESLLMALKDLAVSSGSACTSASLEPSYVLRALGLNDELAHSSIRFSFGRFTTEAEIDYAIELIRVAVDKLRAMSPLWDMYKDGVDLNTVEWAHH</sequence>
<evidence type="ECO:0000255" key="1">
    <source>
        <dbReference type="HAMAP-Rule" id="MF_00331"/>
    </source>
</evidence>
<accession>C3LT01</accession>
<dbReference type="EC" id="2.8.1.7" evidence="1"/>
<dbReference type="EMBL" id="CP001233">
    <property type="protein sequence ID" value="ACP05027.1"/>
    <property type="molecule type" value="Genomic_DNA"/>
</dbReference>
<dbReference type="RefSeq" id="WP_000775249.1">
    <property type="nucleotide sequence ID" value="NC_012578.1"/>
</dbReference>
<dbReference type="SMR" id="C3LT01"/>
<dbReference type="KEGG" id="vcm:VCM66_0706"/>
<dbReference type="HOGENOM" id="CLU_003433_0_2_6"/>
<dbReference type="UniPathway" id="UPA00266"/>
<dbReference type="Proteomes" id="UP000001217">
    <property type="component" value="Chromosome I"/>
</dbReference>
<dbReference type="GO" id="GO:1990221">
    <property type="term" value="C:L-cysteine desulfurase complex"/>
    <property type="evidence" value="ECO:0007669"/>
    <property type="project" value="UniProtKB-ARBA"/>
</dbReference>
<dbReference type="GO" id="GO:0051537">
    <property type="term" value="F:2 iron, 2 sulfur cluster binding"/>
    <property type="evidence" value="ECO:0007669"/>
    <property type="project" value="UniProtKB-UniRule"/>
</dbReference>
<dbReference type="GO" id="GO:0031071">
    <property type="term" value="F:cysteine desulfurase activity"/>
    <property type="evidence" value="ECO:0007669"/>
    <property type="project" value="UniProtKB-UniRule"/>
</dbReference>
<dbReference type="GO" id="GO:0046872">
    <property type="term" value="F:metal ion binding"/>
    <property type="evidence" value="ECO:0007669"/>
    <property type="project" value="UniProtKB-KW"/>
</dbReference>
<dbReference type="GO" id="GO:0030170">
    <property type="term" value="F:pyridoxal phosphate binding"/>
    <property type="evidence" value="ECO:0007669"/>
    <property type="project" value="UniProtKB-UniRule"/>
</dbReference>
<dbReference type="GO" id="GO:0044571">
    <property type="term" value="P:[2Fe-2S] cluster assembly"/>
    <property type="evidence" value="ECO:0007669"/>
    <property type="project" value="UniProtKB-UniRule"/>
</dbReference>
<dbReference type="FunFam" id="3.40.640.10:FF:000003">
    <property type="entry name" value="Cysteine desulfurase IscS"/>
    <property type="match status" value="1"/>
</dbReference>
<dbReference type="FunFam" id="3.90.1150.10:FF:000002">
    <property type="entry name" value="Cysteine desulfurase IscS"/>
    <property type="match status" value="1"/>
</dbReference>
<dbReference type="Gene3D" id="3.90.1150.10">
    <property type="entry name" value="Aspartate Aminotransferase, domain 1"/>
    <property type="match status" value="1"/>
</dbReference>
<dbReference type="Gene3D" id="3.40.640.10">
    <property type="entry name" value="Type I PLP-dependent aspartate aminotransferase-like (Major domain)"/>
    <property type="match status" value="1"/>
</dbReference>
<dbReference type="HAMAP" id="MF_00331">
    <property type="entry name" value="Cys_desulf_IscS"/>
    <property type="match status" value="1"/>
</dbReference>
<dbReference type="InterPro" id="IPR000192">
    <property type="entry name" value="Aminotrans_V_dom"/>
</dbReference>
<dbReference type="InterPro" id="IPR020578">
    <property type="entry name" value="Aminotrans_V_PyrdxlP_BS"/>
</dbReference>
<dbReference type="InterPro" id="IPR010240">
    <property type="entry name" value="Cys_deSase_IscS"/>
</dbReference>
<dbReference type="InterPro" id="IPR016454">
    <property type="entry name" value="Cysteine_dSase"/>
</dbReference>
<dbReference type="InterPro" id="IPR015424">
    <property type="entry name" value="PyrdxlP-dep_Trfase"/>
</dbReference>
<dbReference type="InterPro" id="IPR015421">
    <property type="entry name" value="PyrdxlP-dep_Trfase_major"/>
</dbReference>
<dbReference type="InterPro" id="IPR015422">
    <property type="entry name" value="PyrdxlP-dep_Trfase_small"/>
</dbReference>
<dbReference type="NCBIfam" id="TIGR02006">
    <property type="entry name" value="IscS"/>
    <property type="match status" value="1"/>
</dbReference>
<dbReference type="NCBIfam" id="NF002806">
    <property type="entry name" value="PRK02948.1"/>
    <property type="match status" value="1"/>
</dbReference>
<dbReference type="NCBIfam" id="NF010611">
    <property type="entry name" value="PRK14012.1"/>
    <property type="match status" value="1"/>
</dbReference>
<dbReference type="PANTHER" id="PTHR11601:SF34">
    <property type="entry name" value="CYSTEINE DESULFURASE"/>
    <property type="match status" value="1"/>
</dbReference>
<dbReference type="PANTHER" id="PTHR11601">
    <property type="entry name" value="CYSTEINE DESULFURYLASE FAMILY MEMBER"/>
    <property type="match status" value="1"/>
</dbReference>
<dbReference type="Pfam" id="PF00266">
    <property type="entry name" value="Aminotran_5"/>
    <property type="match status" value="1"/>
</dbReference>
<dbReference type="PIRSF" id="PIRSF005572">
    <property type="entry name" value="NifS"/>
    <property type="match status" value="1"/>
</dbReference>
<dbReference type="SUPFAM" id="SSF53383">
    <property type="entry name" value="PLP-dependent transferases"/>
    <property type="match status" value="1"/>
</dbReference>
<dbReference type="PROSITE" id="PS00595">
    <property type="entry name" value="AA_TRANSFER_CLASS_5"/>
    <property type="match status" value="1"/>
</dbReference>